<name>PSAB_CHLSC</name>
<sequence length="734" mass="82440">MALRFPRFSQGLAQDPTTRRIWFGIATAHDFESHDDITEERLYQNIFASHFGQLAIIFLWTSGNLFHVAWQGNFQSWVQDPLHVRPIAHAIWDPHFGQPAVEAFTRGGALGPVNIAYSGVYQWWYTIGLRTNEDLYTGALFLLFLSAISLIAGWLHLQPKWKPSVSWFKNAESRLNHHLSGLFGVSSLAWTGHLVHVAIPGSRGEYVRWNNFLDVLPHPQGLGPLFTGQWNLYAQNPDSSSHLFGTSQGAGTAILTLLGGFHPQTQSLWLTDMAHHHLAIAFIFLVAGHMYRTNFGIGHSMKDLLEAHIPPGGRLGRGHKGLYDTINNSIHFQLGLALASLGVITSLVAQHMYSLPAYAFIAQDFTTQAALYTHHQYIAGFIMTGAFAHGAIFFIRDYNPEQNEDNVLARMLDHKEAIKSHLSWASLFLGFHTLGLYVHNDVMLAFGTPEKQILIEPIFAQWIQSAHGKTSYGFDVLLSSTNGPAFNAGRSIWLPGWLNAVNENSNSLFLTIGPGDFLVHHAIALGLHTTTLILVKGALDARGSKLMPDKKDFGYSFPCDGPGRGGTCDISAWDAFYLAVFWMLNTIGWVTFYWHWKHITLWQGNVSQFNESSTYLMGWLRDYLWLNSSQLINGYNPFGTNSLSVWAWMFLFGHLVWATGFMFLISWRGYWQELIETLAWAHERTPLANLIRWRDKPVALSIVQARLVGLAHFSVGYIFTYAAFLIASTSGKFG</sequence>
<dbReference type="EC" id="1.97.1.12" evidence="1"/>
<dbReference type="EMBL" id="EF380352">
    <property type="protein sequence ID" value="ABQ43259.1"/>
    <property type="molecule type" value="Genomic_DNA"/>
</dbReference>
<dbReference type="RefSeq" id="YP_001294097.1">
    <property type="nucleotide sequence ID" value="NC_009598.1"/>
</dbReference>
<dbReference type="SMR" id="A6MMC1"/>
<dbReference type="GeneID" id="5236483"/>
<dbReference type="GO" id="GO:0009535">
    <property type="term" value="C:chloroplast thylakoid membrane"/>
    <property type="evidence" value="ECO:0007669"/>
    <property type="project" value="UniProtKB-SubCell"/>
</dbReference>
<dbReference type="GO" id="GO:0009522">
    <property type="term" value="C:photosystem I"/>
    <property type="evidence" value="ECO:0007669"/>
    <property type="project" value="UniProtKB-KW"/>
</dbReference>
<dbReference type="GO" id="GO:0051539">
    <property type="term" value="F:4 iron, 4 sulfur cluster binding"/>
    <property type="evidence" value="ECO:0007669"/>
    <property type="project" value="UniProtKB-KW"/>
</dbReference>
<dbReference type="GO" id="GO:0016168">
    <property type="term" value="F:chlorophyll binding"/>
    <property type="evidence" value="ECO:0007669"/>
    <property type="project" value="UniProtKB-KW"/>
</dbReference>
<dbReference type="GO" id="GO:0009055">
    <property type="term" value="F:electron transfer activity"/>
    <property type="evidence" value="ECO:0007669"/>
    <property type="project" value="UniProtKB-UniRule"/>
</dbReference>
<dbReference type="GO" id="GO:0000287">
    <property type="term" value="F:magnesium ion binding"/>
    <property type="evidence" value="ECO:0007669"/>
    <property type="project" value="UniProtKB-UniRule"/>
</dbReference>
<dbReference type="GO" id="GO:0016491">
    <property type="term" value="F:oxidoreductase activity"/>
    <property type="evidence" value="ECO:0007669"/>
    <property type="project" value="UniProtKB-KW"/>
</dbReference>
<dbReference type="GO" id="GO:0015979">
    <property type="term" value="P:photosynthesis"/>
    <property type="evidence" value="ECO:0007669"/>
    <property type="project" value="UniProtKB-UniRule"/>
</dbReference>
<dbReference type="FunFam" id="1.20.1130.10:FF:000001">
    <property type="entry name" value="Photosystem I P700 chlorophyll a apoprotein A2"/>
    <property type="match status" value="1"/>
</dbReference>
<dbReference type="Gene3D" id="1.20.1130.10">
    <property type="entry name" value="Photosystem I PsaA/PsaB"/>
    <property type="match status" value="1"/>
</dbReference>
<dbReference type="HAMAP" id="MF_00482">
    <property type="entry name" value="PSI_PsaB"/>
    <property type="match status" value="1"/>
</dbReference>
<dbReference type="InterPro" id="IPR001280">
    <property type="entry name" value="PSI_PsaA/B"/>
</dbReference>
<dbReference type="InterPro" id="IPR020586">
    <property type="entry name" value="PSI_PsaA/B_CS"/>
</dbReference>
<dbReference type="InterPro" id="IPR036408">
    <property type="entry name" value="PSI_PsaA/B_sf"/>
</dbReference>
<dbReference type="InterPro" id="IPR006244">
    <property type="entry name" value="PSI_PsaB"/>
</dbReference>
<dbReference type="NCBIfam" id="TIGR01336">
    <property type="entry name" value="psaB"/>
    <property type="match status" value="1"/>
</dbReference>
<dbReference type="PANTHER" id="PTHR30128">
    <property type="entry name" value="OUTER MEMBRANE PROTEIN, OMPA-RELATED"/>
    <property type="match status" value="1"/>
</dbReference>
<dbReference type="PANTHER" id="PTHR30128:SF19">
    <property type="entry name" value="PHOTOSYSTEM I P700 CHLOROPHYLL A APOPROTEIN A1-RELATED"/>
    <property type="match status" value="1"/>
</dbReference>
<dbReference type="Pfam" id="PF00223">
    <property type="entry name" value="PsaA_PsaB"/>
    <property type="match status" value="1"/>
</dbReference>
<dbReference type="PIRSF" id="PIRSF002905">
    <property type="entry name" value="PSI_A"/>
    <property type="match status" value="1"/>
</dbReference>
<dbReference type="PRINTS" id="PR00257">
    <property type="entry name" value="PHOTSYSPSAAB"/>
</dbReference>
<dbReference type="SUPFAM" id="SSF81558">
    <property type="entry name" value="Photosystem I subunits PsaA/PsaB"/>
    <property type="match status" value="1"/>
</dbReference>
<dbReference type="PROSITE" id="PS00419">
    <property type="entry name" value="PHOTOSYSTEM_I_PSAAB"/>
    <property type="match status" value="1"/>
</dbReference>
<reference key="1">
    <citation type="journal article" date="2007" name="Mol. Phylogenet. Evol.">
        <title>Phylogenetic and evolutionary implications of complete chloroplast genome sequences of four early-diverging angiosperms: Buxus (Buxaceae), Chloranthus (Chloranthaceae), Dioscorea (Dioscoreaceae), and Illicium (Schisandraceae).</title>
        <authorList>
            <person name="Hansen D.R."/>
            <person name="Dastidar S.G."/>
            <person name="Cai Z."/>
            <person name="Penaflor C."/>
            <person name="Kuehl J.V."/>
            <person name="Boore J.L."/>
            <person name="Jansen R.K."/>
        </authorList>
    </citation>
    <scope>NUCLEOTIDE SEQUENCE [LARGE SCALE GENOMIC DNA]</scope>
</reference>
<proteinExistence type="inferred from homology"/>
<accession>A6MMC1</accession>
<geneLocation type="chloroplast"/>
<keyword id="KW-0004">4Fe-4S</keyword>
<keyword id="KW-0148">Chlorophyll</keyword>
<keyword id="KW-0150">Chloroplast</keyword>
<keyword id="KW-0157">Chromophore</keyword>
<keyword id="KW-0249">Electron transport</keyword>
<keyword id="KW-0408">Iron</keyword>
<keyword id="KW-0411">Iron-sulfur</keyword>
<keyword id="KW-0460">Magnesium</keyword>
<keyword id="KW-0472">Membrane</keyword>
<keyword id="KW-0479">Metal-binding</keyword>
<keyword id="KW-0560">Oxidoreductase</keyword>
<keyword id="KW-0602">Photosynthesis</keyword>
<keyword id="KW-0603">Photosystem I</keyword>
<keyword id="KW-0934">Plastid</keyword>
<keyword id="KW-0793">Thylakoid</keyword>
<keyword id="KW-0812">Transmembrane</keyword>
<keyword id="KW-1133">Transmembrane helix</keyword>
<keyword id="KW-0813">Transport</keyword>
<comment type="function">
    <text evidence="1">PsaA and PsaB bind P700, the primary electron donor of photosystem I (PSI), as well as the electron acceptors A0, A1 and FX. PSI is a plastocyanin-ferredoxin oxidoreductase, converting photonic excitation into a charge separation, which transfers an electron from the donor P700 chlorophyll pair to the spectroscopically characterized acceptors A0, A1, FX, FA and FB in turn. Oxidized P700 is reduced on the lumenal side of the thylakoid membrane by plastocyanin.</text>
</comment>
<comment type="catalytic activity">
    <reaction evidence="1">
        <text>reduced [plastocyanin] + hnu + oxidized [2Fe-2S]-[ferredoxin] = oxidized [plastocyanin] + reduced [2Fe-2S]-[ferredoxin]</text>
        <dbReference type="Rhea" id="RHEA:30407"/>
        <dbReference type="Rhea" id="RHEA-COMP:10000"/>
        <dbReference type="Rhea" id="RHEA-COMP:10001"/>
        <dbReference type="Rhea" id="RHEA-COMP:10039"/>
        <dbReference type="Rhea" id="RHEA-COMP:10040"/>
        <dbReference type="ChEBI" id="CHEBI:29036"/>
        <dbReference type="ChEBI" id="CHEBI:30212"/>
        <dbReference type="ChEBI" id="CHEBI:33737"/>
        <dbReference type="ChEBI" id="CHEBI:33738"/>
        <dbReference type="ChEBI" id="CHEBI:49552"/>
        <dbReference type="EC" id="1.97.1.12"/>
    </reaction>
</comment>
<comment type="cofactor">
    <text evidence="1">P700 is a chlorophyll a/chlorophyll a' dimer, A0 is one or more chlorophyll a, A1 is one or both phylloquinones and FX is a shared 4Fe-4S iron-sulfur center.</text>
</comment>
<comment type="subunit">
    <text evidence="1">The PsaA/B heterodimer binds the P700 chlorophyll special pair and subsequent electron acceptors. PSI consists of a core antenna complex that captures photons, and an electron transfer chain that converts photonic excitation into a charge separation. The eukaryotic PSI reaction center is composed of at least 11 subunits.</text>
</comment>
<comment type="subcellular location">
    <subcellularLocation>
        <location evidence="1">Plastid</location>
        <location evidence="1">Chloroplast thylakoid membrane</location>
        <topology evidence="1">Multi-pass membrane protein</topology>
    </subcellularLocation>
</comment>
<comment type="similarity">
    <text evidence="1">Belongs to the PsaA/PsaB family.</text>
</comment>
<organism>
    <name type="scientific">Chloranthus spicatus</name>
    <name type="common">Chulantree</name>
    <name type="synonym">Nigrina spicata</name>
    <dbReference type="NCBI Taxonomy" id="13006"/>
    <lineage>
        <taxon>Eukaryota</taxon>
        <taxon>Viridiplantae</taxon>
        <taxon>Streptophyta</taxon>
        <taxon>Embryophyta</taxon>
        <taxon>Tracheophyta</taxon>
        <taxon>Spermatophyta</taxon>
        <taxon>Magnoliopsida</taxon>
        <taxon>Chloranthales</taxon>
        <taxon>Chloranthaceae</taxon>
        <taxon>Chloranthus</taxon>
    </lineage>
</organism>
<feature type="chain" id="PRO_0000300038" description="Photosystem I P700 chlorophyll a apoprotein A2">
    <location>
        <begin position="1"/>
        <end position="734"/>
    </location>
</feature>
<feature type="transmembrane region" description="Helical; Name=I" evidence="1">
    <location>
        <begin position="46"/>
        <end position="69"/>
    </location>
</feature>
<feature type="transmembrane region" description="Helical; Name=II" evidence="1">
    <location>
        <begin position="135"/>
        <end position="158"/>
    </location>
</feature>
<feature type="transmembrane region" description="Helical; Name=III" evidence="1">
    <location>
        <begin position="175"/>
        <end position="199"/>
    </location>
</feature>
<feature type="transmembrane region" description="Helical; Name=IV" evidence="1">
    <location>
        <begin position="273"/>
        <end position="291"/>
    </location>
</feature>
<feature type="transmembrane region" description="Helical; Name=V" evidence="1">
    <location>
        <begin position="330"/>
        <end position="353"/>
    </location>
</feature>
<feature type="transmembrane region" description="Helical; Name=VI" evidence="1">
    <location>
        <begin position="369"/>
        <end position="395"/>
    </location>
</feature>
<feature type="transmembrane region" description="Helical; Name=VII" evidence="1">
    <location>
        <begin position="417"/>
        <end position="439"/>
    </location>
</feature>
<feature type="transmembrane region" description="Helical; Name=VIII" evidence="1">
    <location>
        <begin position="517"/>
        <end position="535"/>
    </location>
</feature>
<feature type="transmembrane region" description="Helical; Name=IX" evidence="1">
    <location>
        <begin position="575"/>
        <end position="596"/>
    </location>
</feature>
<feature type="transmembrane region" description="Helical; Name=X" evidence="1">
    <location>
        <begin position="643"/>
        <end position="665"/>
    </location>
</feature>
<feature type="transmembrane region" description="Helical; Name=XI" evidence="1">
    <location>
        <begin position="707"/>
        <end position="727"/>
    </location>
</feature>
<feature type="binding site" evidence="1">
    <location>
        <position position="559"/>
    </location>
    <ligand>
        <name>[4Fe-4S] cluster</name>
        <dbReference type="ChEBI" id="CHEBI:49883"/>
        <note>ligand shared between dimeric partners</note>
    </ligand>
</feature>
<feature type="binding site" evidence="1">
    <location>
        <position position="568"/>
    </location>
    <ligand>
        <name>[4Fe-4S] cluster</name>
        <dbReference type="ChEBI" id="CHEBI:49883"/>
        <note>ligand shared between dimeric partners</note>
    </ligand>
</feature>
<feature type="binding site" description="axial binding residue" evidence="1">
    <location>
        <position position="654"/>
    </location>
    <ligand>
        <name>chlorophyll a</name>
        <dbReference type="ChEBI" id="CHEBI:58416"/>
        <label>B1</label>
    </ligand>
    <ligandPart>
        <name>Mg</name>
        <dbReference type="ChEBI" id="CHEBI:25107"/>
    </ligandPart>
</feature>
<feature type="binding site" description="axial binding residue" evidence="1">
    <location>
        <position position="662"/>
    </location>
    <ligand>
        <name>chlorophyll a</name>
        <dbReference type="ChEBI" id="CHEBI:58416"/>
        <label>B3</label>
    </ligand>
    <ligandPart>
        <name>Mg</name>
        <dbReference type="ChEBI" id="CHEBI:25107"/>
    </ligandPart>
</feature>
<feature type="binding site" evidence="1">
    <location>
        <position position="670"/>
    </location>
    <ligand>
        <name>chlorophyll a</name>
        <dbReference type="ChEBI" id="CHEBI:58416"/>
        <label>B3</label>
    </ligand>
</feature>
<feature type="binding site" evidence="1">
    <location>
        <position position="671"/>
    </location>
    <ligand>
        <name>phylloquinone</name>
        <dbReference type="ChEBI" id="CHEBI:18067"/>
        <label>B</label>
    </ligand>
</feature>
<gene>
    <name evidence="1" type="primary">psaB</name>
</gene>
<evidence type="ECO:0000255" key="1">
    <source>
        <dbReference type="HAMAP-Rule" id="MF_00482"/>
    </source>
</evidence>
<protein>
    <recommendedName>
        <fullName evidence="1">Photosystem I P700 chlorophyll a apoprotein A2</fullName>
        <ecNumber evidence="1">1.97.1.12</ecNumber>
    </recommendedName>
    <alternativeName>
        <fullName evidence="1">PSI-B</fullName>
    </alternativeName>
    <alternativeName>
        <fullName evidence="1">PsaB</fullName>
    </alternativeName>
</protein>